<reference key="1">
    <citation type="journal article" date="2003" name="Science">
        <title>A genomic view of the human-Bacteroides thetaiotaomicron symbiosis.</title>
        <authorList>
            <person name="Xu J."/>
            <person name="Bjursell M.K."/>
            <person name="Himrod J."/>
            <person name="Deng S."/>
            <person name="Carmichael L.K."/>
            <person name="Chiang H.C."/>
            <person name="Hooper L.V."/>
            <person name="Gordon J.I."/>
        </authorList>
    </citation>
    <scope>NUCLEOTIDE SEQUENCE [LARGE SCALE GENOMIC DNA]</scope>
    <source>
        <strain>ATCC 29148 / DSM 2079 / JCM 5827 / CCUG 10774 / NCTC 10582 / VPI-5482 / E50</strain>
    </source>
</reference>
<feature type="chain" id="PRO_0000237977" description="Large-conductance mechanosensitive channel">
    <location>
        <begin position="1"/>
        <end position="148"/>
    </location>
</feature>
<feature type="transmembrane region" description="Helical" evidence="1">
    <location>
        <begin position="12"/>
        <end position="32"/>
    </location>
</feature>
<feature type="transmembrane region" description="Helical" evidence="1">
    <location>
        <begin position="85"/>
        <end position="105"/>
    </location>
</feature>
<protein>
    <recommendedName>
        <fullName evidence="1">Large-conductance mechanosensitive channel</fullName>
    </recommendedName>
</protein>
<organism>
    <name type="scientific">Bacteroides thetaiotaomicron (strain ATCC 29148 / DSM 2079 / JCM 5827 / CCUG 10774 / NCTC 10582 / VPI-5482 / E50)</name>
    <dbReference type="NCBI Taxonomy" id="226186"/>
    <lineage>
        <taxon>Bacteria</taxon>
        <taxon>Pseudomonadati</taxon>
        <taxon>Bacteroidota</taxon>
        <taxon>Bacteroidia</taxon>
        <taxon>Bacteroidales</taxon>
        <taxon>Bacteroidaceae</taxon>
        <taxon>Bacteroides</taxon>
    </lineage>
</organism>
<proteinExistence type="inferred from homology"/>
<keyword id="KW-0997">Cell inner membrane</keyword>
<keyword id="KW-1003">Cell membrane</keyword>
<keyword id="KW-0407">Ion channel</keyword>
<keyword id="KW-0406">Ion transport</keyword>
<keyword id="KW-0472">Membrane</keyword>
<keyword id="KW-1185">Reference proteome</keyword>
<keyword id="KW-0812">Transmembrane</keyword>
<keyword id="KW-1133">Transmembrane helix</keyword>
<keyword id="KW-0813">Transport</keyword>
<evidence type="ECO:0000255" key="1">
    <source>
        <dbReference type="HAMAP-Rule" id="MF_00115"/>
    </source>
</evidence>
<sequence>MGKSTFLQDFKAFAMKGNVIDMAVGVVIGGAFGKIVSSLVANVIMPPIGLLVGGVNFTDLKWVMKAAEVGADGKEIAPAVSLDYGQFLQATFDFLIIAFAIFLFIRLITKLTTKKAAEEAPAAPPAPPAPTKEEVLLTEIRDLLKEKK</sequence>
<gene>
    <name evidence="1" type="primary">mscL</name>
    <name type="ordered locus">BT_4264</name>
</gene>
<dbReference type="EMBL" id="AE015928">
    <property type="protein sequence ID" value="AAO79369.1"/>
    <property type="molecule type" value="Genomic_DNA"/>
</dbReference>
<dbReference type="RefSeq" id="NP_813175.1">
    <property type="nucleotide sequence ID" value="NC_004663.1"/>
</dbReference>
<dbReference type="RefSeq" id="WP_008759941.1">
    <property type="nucleotide sequence ID" value="NZ_UYXG01000012.1"/>
</dbReference>
<dbReference type="FunCoup" id="Q89ZV7">
    <property type="interactions" value="291"/>
</dbReference>
<dbReference type="STRING" id="226186.BT_4264"/>
<dbReference type="PaxDb" id="226186-BT_4264"/>
<dbReference type="EnsemblBacteria" id="AAO79369">
    <property type="protein sequence ID" value="AAO79369"/>
    <property type="gene ID" value="BT_4264"/>
</dbReference>
<dbReference type="GeneID" id="60925441"/>
<dbReference type="KEGG" id="bth:BT_4264"/>
<dbReference type="PATRIC" id="fig|226186.12.peg.4337"/>
<dbReference type="eggNOG" id="COG1970">
    <property type="taxonomic scope" value="Bacteria"/>
</dbReference>
<dbReference type="HOGENOM" id="CLU_095787_0_0_10"/>
<dbReference type="InParanoid" id="Q89ZV7"/>
<dbReference type="OrthoDB" id="9810350at2"/>
<dbReference type="Proteomes" id="UP000001414">
    <property type="component" value="Chromosome"/>
</dbReference>
<dbReference type="GO" id="GO:0016020">
    <property type="term" value="C:membrane"/>
    <property type="evidence" value="ECO:0000318"/>
    <property type="project" value="GO_Central"/>
</dbReference>
<dbReference type="GO" id="GO:0005886">
    <property type="term" value="C:plasma membrane"/>
    <property type="evidence" value="ECO:0007669"/>
    <property type="project" value="UniProtKB-SubCell"/>
</dbReference>
<dbReference type="GO" id="GO:0008381">
    <property type="term" value="F:mechanosensitive monoatomic ion channel activity"/>
    <property type="evidence" value="ECO:0000318"/>
    <property type="project" value="GO_Central"/>
</dbReference>
<dbReference type="GO" id="GO:0006811">
    <property type="term" value="P:monoatomic ion transport"/>
    <property type="evidence" value="ECO:0000318"/>
    <property type="project" value="GO_Central"/>
</dbReference>
<dbReference type="FunFam" id="1.10.1200.120:FF:000001">
    <property type="entry name" value="Large-conductance mechanosensitive channel"/>
    <property type="match status" value="1"/>
</dbReference>
<dbReference type="Gene3D" id="1.10.1200.120">
    <property type="entry name" value="Large-conductance mechanosensitive channel, MscL, domain 1"/>
    <property type="match status" value="1"/>
</dbReference>
<dbReference type="HAMAP" id="MF_00115">
    <property type="entry name" value="MscL"/>
    <property type="match status" value="1"/>
</dbReference>
<dbReference type="InterPro" id="IPR019823">
    <property type="entry name" value="Mechanosensitive_channel_CS"/>
</dbReference>
<dbReference type="InterPro" id="IPR001185">
    <property type="entry name" value="MS_channel"/>
</dbReference>
<dbReference type="InterPro" id="IPR037673">
    <property type="entry name" value="MSC/AndL"/>
</dbReference>
<dbReference type="InterPro" id="IPR036019">
    <property type="entry name" value="MscL_channel"/>
</dbReference>
<dbReference type="NCBIfam" id="TIGR00220">
    <property type="entry name" value="mscL"/>
    <property type="match status" value="1"/>
</dbReference>
<dbReference type="NCBIfam" id="NF001843">
    <property type="entry name" value="PRK00567.1-4"/>
    <property type="match status" value="1"/>
</dbReference>
<dbReference type="PANTHER" id="PTHR30266:SF2">
    <property type="entry name" value="LARGE-CONDUCTANCE MECHANOSENSITIVE CHANNEL"/>
    <property type="match status" value="1"/>
</dbReference>
<dbReference type="PANTHER" id="PTHR30266">
    <property type="entry name" value="MECHANOSENSITIVE CHANNEL MSCL"/>
    <property type="match status" value="1"/>
</dbReference>
<dbReference type="Pfam" id="PF01741">
    <property type="entry name" value="MscL"/>
    <property type="match status" value="1"/>
</dbReference>
<dbReference type="PRINTS" id="PR01264">
    <property type="entry name" value="MECHCHANNEL"/>
</dbReference>
<dbReference type="SUPFAM" id="SSF81330">
    <property type="entry name" value="Gated mechanosensitive channel"/>
    <property type="match status" value="1"/>
</dbReference>
<dbReference type="PROSITE" id="PS01327">
    <property type="entry name" value="MSCL"/>
    <property type="match status" value="1"/>
</dbReference>
<accession>Q89ZV7</accession>
<comment type="function">
    <text evidence="1">Channel that opens in response to stretch forces in the membrane lipid bilayer. May participate in the regulation of osmotic pressure changes within the cell.</text>
</comment>
<comment type="subunit">
    <text evidence="1">Homopentamer.</text>
</comment>
<comment type="subcellular location">
    <subcellularLocation>
        <location evidence="1">Cell inner membrane</location>
        <topology evidence="1">Multi-pass membrane protein</topology>
    </subcellularLocation>
</comment>
<comment type="similarity">
    <text evidence="1">Belongs to the MscL family.</text>
</comment>
<name>MSCL_BACTN</name>